<reference key="1">
    <citation type="journal article" date="2005" name="Nature">
        <title>The genome of the social amoeba Dictyostelium discoideum.</title>
        <authorList>
            <person name="Eichinger L."/>
            <person name="Pachebat J.A."/>
            <person name="Gloeckner G."/>
            <person name="Rajandream M.A."/>
            <person name="Sucgang R."/>
            <person name="Berriman M."/>
            <person name="Song J."/>
            <person name="Olsen R."/>
            <person name="Szafranski K."/>
            <person name="Xu Q."/>
            <person name="Tunggal B."/>
            <person name="Kummerfeld S."/>
            <person name="Madera M."/>
            <person name="Konfortov B.A."/>
            <person name="Rivero F."/>
            <person name="Bankier A.T."/>
            <person name="Lehmann R."/>
            <person name="Hamlin N."/>
            <person name="Davies R."/>
            <person name="Gaudet P."/>
            <person name="Fey P."/>
            <person name="Pilcher K."/>
            <person name="Chen G."/>
            <person name="Saunders D."/>
            <person name="Sodergren E.J."/>
            <person name="Davis P."/>
            <person name="Kerhornou A."/>
            <person name="Nie X."/>
            <person name="Hall N."/>
            <person name="Anjard C."/>
            <person name="Hemphill L."/>
            <person name="Bason N."/>
            <person name="Farbrother P."/>
            <person name="Desany B."/>
            <person name="Just E."/>
            <person name="Morio T."/>
            <person name="Rost R."/>
            <person name="Churcher C.M."/>
            <person name="Cooper J."/>
            <person name="Haydock S."/>
            <person name="van Driessche N."/>
            <person name="Cronin A."/>
            <person name="Goodhead I."/>
            <person name="Muzny D.M."/>
            <person name="Mourier T."/>
            <person name="Pain A."/>
            <person name="Lu M."/>
            <person name="Harper D."/>
            <person name="Lindsay R."/>
            <person name="Hauser H."/>
            <person name="James K.D."/>
            <person name="Quiles M."/>
            <person name="Madan Babu M."/>
            <person name="Saito T."/>
            <person name="Buchrieser C."/>
            <person name="Wardroper A."/>
            <person name="Felder M."/>
            <person name="Thangavelu M."/>
            <person name="Johnson D."/>
            <person name="Knights A."/>
            <person name="Loulseged H."/>
            <person name="Mungall K.L."/>
            <person name="Oliver K."/>
            <person name="Price C."/>
            <person name="Quail M.A."/>
            <person name="Urushihara H."/>
            <person name="Hernandez J."/>
            <person name="Rabbinowitsch E."/>
            <person name="Steffen D."/>
            <person name="Sanders M."/>
            <person name="Ma J."/>
            <person name="Kohara Y."/>
            <person name="Sharp S."/>
            <person name="Simmonds M.N."/>
            <person name="Spiegler S."/>
            <person name="Tivey A."/>
            <person name="Sugano S."/>
            <person name="White B."/>
            <person name="Walker D."/>
            <person name="Woodward J.R."/>
            <person name="Winckler T."/>
            <person name="Tanaka Y."/>
            <person name="Shaulsky G."/>
            <person name="Schleicher M."/>
            <person name="Weinstock G.M."/>
            <person name="Rosenthal A."/>
            <person name="Cox E.C."/>
            <person name="Chisholm R.L."/>
            <person name="Gibbs R.A."/>
            <person name="Loomis W.F."/>
            <person name="Platzer M."/>
            <person name="Kay R.R."/>
            <person name="Williams J.G."/>
            <person name="Dear P.H."/>
            <person name="Noegel A.A."/>
            <person name="Barrell B.G."/>
            <person name="Kuspa A."/>
        </authorList>
    </citation>
    <scope>NUCLEOTIDE SEQUENCE [LARGE SCALE GENOMIC DNA]</scope>
    <source>
        <strain>AX4</strain>
    </source>
</reference>
<reference key="2">
    <citation type="journal article" date="2007" name="Biochimie">
        <title>Mitochondrial carrier family: repertoire and peculiarities of the cellular slime mould Dictyostelium discoideum.</title>
        <authorList>
            <person name="Satre M."/>
            <person name="Mattei S."/>
            <person name="Aubry L."/>
            <person name="Gaudet P."/>
            <person name="Pelosi L."/>
            <person name="Brandolin G."/>
            <person name="Klein G."/>
        </authorList>
    </citation>
    <scope>REVIEW</scope>
</reference>
<organism>
    <name type="scientific">Dictyostelium discoideum</name>
    <name type="common">Social amoeba</name>
    <dbReference type="NCBI Taxonomy" id="44689"/>
    <lineage>
        <taxon>Eukaryota</taxon>
        <taxon>Amoebozoa</taxon>
        <taxon>Evosea</taxon>
        <taxon>Eumycetozoa</taxon>
        <taxon>Dictyostelia</taxon>
        <taxon>Dictyosteliales</taxon>
        <taxon>Dictyosteliaceae</taxon>
        <taxon>Dictyostelium</taxon>
    </lineage>
</organism>
<feature type="chain" id="PRO_0000385521" description="Mitochondrial substrate carrier family protein E">
    <location>
        <begin position="1"/>
        <end position="303"/>
    </location>
</feature>
<feature type="topological domain" description="Mitochondrial intermembrane" evidence="1">
    <location>
        <begin position="1"/>
        <end position="8"/>
    </location>
</feature>
<feature type="transmembrane region" description="Helical; Name=1" evidence="2">
    <location>
        <begin position="9"/>
        <end position="29"/>
    </location>
</feature>
<feature type="topological domain" description="Mitochondrial matrix" evidence="1">
    <location>
        <begin position="30"/>
        <end position="67"/>
    </location>
</feature>
<feature type="transmembrane region" description="Helical; Name=2" evidence="2">
    <location>
        <begin position="68"/>
        <end position="88"/>
    </location>
</feature>
<feature type="topological domain" description="Mitochondrial intermembrane" evidence="1">
    <location>
        <begin position="89"/>
        <end position="109"/>
    </location>
</feature>
<feature type="transmembrane region" description="Helical; Name=3" evidence="2">
    <location>
        <begin position="110"/>
        <end position="130"/>
    </location>
</feature>
<feature type="topological domain" description="Mitochondrial matrix" evidence="1">
    <location>
        <begin position="131"/>
        <end position="171"/>
    </location>
</feature>
<feature type="transmembrane region" description="Helical; Name=4" evidence="2">
    <location>
        <begin position="172"/>
        <end position="192"/>
    </location>
</feature>
<feature type="topological domain" description="Mitochondrial intermembrane" evidence="1">
    <location>
        <begin position="193"/>
        <end position="215"/>
    </location>
</feature>
<feature type="transmembrane region" description="Helical; Name=5" evidence="2">
    <location>
        <begin position="216"/>
        <end position="236"/>
    </location>
</feature>
<feature type="topological domain" description="Mitochondrial matrix" evidence="1">
    <location>
        <begin position="237"/>
        <end position="268"/>
    </location>
</feature>
<feature type="transmembrane region" description="Helical; Name=6" evidence="2">
    <location>
        <begin position="269"/>
        <end position="289"/>
    </location>
</feature>
<feature type="topological domain" description="Mitochondrial intermembrane" evidence="1">
    <location>
        <begin position="290"/>
        <end position="303"/>
    </location>
</feature>
<feature type="repeat" description="Solcar 1">
    <location>
        <begin position="6"/>
        <end position="93"/>
    </location>
</feature>
<feature type="repeat" description="Solcar 2">
    <location>
        <begin position="104"/>
        <end position="197"/>
    </location>
</feature>
<feature type="repeat" description="Solcar 3">
    <location>
        <begin position="210"/>
        <end position="298"/>
    </location>
</feature>
<comment type="function">
    <text evidence="1">Mitochondrial solute carriers shuttle metabolites, nucleotides, and cofactors through the mitochondrial inner membrane.</text>
</comment>
<comment type="subcellular location">
    <subcellularLocation>
        <location evidence="1">Mitochondrion inner membrane</location>
        <topology evidence="1">Multi-pass membrane protein</topology>
    </subcellularLocation>
</comment>
<comment type="similarity">
    <text evidence="3">Belongs to the mitochondrial carrier (TC 2.A.29) family.</text>
</comment>
<proteinExistence type="inferred from homology"/>
<protein>
    <recommendedName>
        <fullName>Mitochondrial substrate carrier family protein E</fullName>
    </recommendedName>
</protein>
<sequence>MENKKESSLLYILTGATSGLLADSIMHPVDTVRARVQIEKVGKSQYKGTFNALNQIIKNEGVSYLYKGFPIVATATVPAHALYFLGYEYSKQWVTDRYGKKWGESTITHFSAGFVADALGSLIWVPMDIIKQRLQVQTNTQKLNPNQTYYKGSFHAGKIILQEEGIRGLYRGFMPALATYGPFVGIYFSVYEKCKSTISSLLSKEKDQYLPIPYQLGSGFFAGAFAAAVTCPLDVIKTRIQVQRSTEKQIYKGMWDSFKTILKEEGPKAFVKGMGARIWWIAPGNALTIASYEQLKYLFKDLI</sequence>
<keyword id="KW-0472">Membrane</keyword>
<keyword id="KW-0496">Mitochondrion</keyword>
<keyword id="KW-0999">Mitochondrion inner membrane</keyword>
<keyword id="KW-1185">Reference proteome</keyword>
<keyword id="KW-0677">Repeat</keyword>
<keyword id="KW-0812">Transmembrane</keyword>
<keyword id="KW-1133">Transmembrane helix</keyword>
<keyword id="KW-0813">Transport</keyword>
<accession>Q55E45</accession>
<name>MCFE_DICDI</name>
<gene>
    <name type="primary">mcfE</name>
    <name type="ORF">DDB_G0269394</name>
</gene>
<evidence type="ECO:0000250" key="1"/>
<evidence type="ECO:0000255" key="2"/>
<evidence type="ECO:0000305" key="3"/>
<dbReference type="EMBL" id="AAFI02000005">
    <property type="protein sequence ID" value="EAL72047.1"/>
    <property type="molecule type" value="Genomic_DNA"/>
</dbReference>
<dbReference type="RefSeq" id="XP_645936.1">
    <property type="nucleotide sequence ID" value="XM_640844.1"/>
</dbReference>
<dbReference type="SMR" id="Q55E45"/>
<dbReference type="FunCoup" id="Q55E45">
    <property type="interactions" value="1"/>
</dbReference>
<dbReference type="PaxDb" id="44689-DDB0237609"/>
<dbReference type="EnsemblProtists" id="EAL72047">
    <property type="protein sequence ID" value="EAL72047"/>
    <property type="gene ID" value="DDB_G0269394"/>
</dbReference>
<dbReference type="GeneID" id="8616880"/>
<dbReference type="KEGG" id="ddi:DDB_G0269394"/>
<dbReference type="dictyBase" id="DDB_G0269394">
    <property type="gene designation" value="mcfE"/>
</dbReference>
<dbReference type="VEuPathDB" id="AmoebaDB:DDB_G0269394"/>
<dbReference type="eggNOG" id="KOG0770">
    <property type="taxonomic scope" value="Eukaryota"/>
</dbReference>
<dbReference type="HOGENOM" id="CLU_015166_3_4_1"/>
<dbReference type="InParanoid" id="Q55E45"/>
<dbReference type="OMA" id="VWVPIDV"/>
<dbReference type="PhylomeDB" id="Q55E45"/>
<dbReference type="PRO" id="PR:Q55E45"/>
<dbReference type="Proteomes" id="UP000002195">
    <property type="component" value="Chromosome 1"/>
</dbReference>
<dbReference type="GO" id="GO:0005743">
    <property type="term" value="C:mitochondrial inner membrane"/>
    <property type="evidence" value="ECO:0007669"/>
    <property type="project" value="UniProtKB-SubCell"/>
</dbReference>
<dbReference type="GO" id="GO:0005381">
    <property type="term" value="F:iron ion transmembrane transporter activity"/>
    <property type="evidence" value="ECO:0007669"/>
    <property type="project" value="UniProtKB-ARBA"/>
</dbReference>
<dbReference type="Gene3D" id="1.50.40.10">
    <property type="entry name" value="Mitochondrial carrier domain"/>
    <property type="match status" value="1"/>
</dbReference>
<dbReference type="InterPro" id="IPR002067">
    <property type="entry name" value="Mit_carrier"/>
</dbReference>
<dbReference type="InterPro" id="IPR018108">
    <property type="entry name" value="Mitochondrial_sb/sol_carrier"/>
</dbReference>
<dbReference type="InterPro" id="IPR023395">
    <property type="entry name" value="Mt_carrier_dom_sf"/>
</dbReference>
<dbReference type="PANTHER" id="PTHR45758:SF3">
    <property type="entry name" value="MITOCHONDRIAL SUBSTRATE CARRIER FAMILY PROTEIN E"/>
    <property type="match status" value="1"/>
</dbReference>
<dbReference type="PANTHER" id="PTHR45758">
    <property type="entry name" value="MITOFERRIN-1-RELATED"/>
    <property type="match status" value="1"/>
</dbReference>
<dbReference type="Pfam" id="PF00153">
    <property type="entry name" value="Mito_carr"/>
    <property type="match status" value="3"/>
</dbReference>
<dbReference type="PRINTS" id="PR00926">
    <property type="entry name" value="MITOCARRIER"/>
</dbReference>
<dbReference type="SUPFAM" id="SSF103506">
    <property type="entry name" value="Mitochondrial carrier"/>
    <property type="match status" value="1"/>
</dbReference>
<dbReference type="PROSITE" id="PS50920">
    <property type="entry name" value="SOLCAR"/>
    <property type="match status" value="3"/>
</dbReference>